<proteinExistence type="evidence at transcript level"/>
<feature type="chain" id="PRO_0000186731" description="Polyphenol oxidase 2">
    <location>
        <begin position="1"/>
        <end position="378"/>
    </location>
</feature>
<feature type="propeptide" id="PRO_0000416863" description="Removed in mature form" evidence="4">
    <location>
        <begin position="379"/>
        <end position="556"/>
    </location>
</feature>
<feature type="binding site" evidence="2">
    <location>
        <position position="57"/>
    </location>
    <ligand>
        <name>Cu cation</name>
        <dbReference type="ChEBI" id="CHEBI:23378"/>
        <label>A</label>
    </ligand>
</feature>
<feature type="binding site" evidence="2">
    <location>
        <position position="81"/>
    </location>
    <ligand>
        <name>Cu cation</name>
        <dbReference type="ChEBI" id="CHEBI:23378"/>
        <label>A</label>
    </ligand>
</feature>
<feature type="binding site" evidence="2">
    <location>
        <position position="90"/>
    </location>
    <ligand>
        <name>Cu cation</name>
        <dbReference type="ChEBI" id="CHEBI:23378"/>
        <label>A</label>
    </ligand>
</feature>
<feature type="binding site" evidence="2">
    <location>
        <position position="250"/>
    </location>
    <ligand>
        <name>Cu cation</name>
        <dbReference type="ChEBI" id="CHEBI:23378"/>
        <label>B</label>
    </ligand>
</feature>
<feature type="binding site" evidence="2">
    <location>
        <position position="254"/>
    </location>
    <ligand>
        <name>Cu cation</name>
        <dbReference type="ChEBI" id="CHEBI:23378"/>
        <label>B</label>
    </ligand>
</feature>
<feature type="binding site" evidence="1">
    <location>
        <position position="254"/>
    </location>
    <ligand>
        <name>substrate</name>
    </ligand>
</feature>
<feature type="binding site" evidence="2">
    <location>
        <position position="282"/>
    </location>
    <ligand>
        <name>Cu cation</name>
        <dbReference type="ChEBI" id="CHEBI:23378"/>
        <label>B</label>
    </ligand>
</feature>
<feature type="site" description="Cleavage" evidence="4">
    <location>
        <begin position="378"/>
        <end position="379"/>
    </location>
</feature>
<feature type="cross-link" description="2'-(S-cysteinyl)-histidine (Cys-His)" evidence="1">
    <location>
        <begin position="79"/>
        <end position="81"/>
    </location>
</feature>
<keyword id="KW-0186">Copper</keyword>
<keyword id="KW-0470">Melanin biosynthesis</keyword>
<keyword id="KW-0479">Metal-binding</keyword>
<keyword id="KW-0503">Monooxygenase</keyword>
<keyword id="KW-0560">Oxidoreductase</keyword>
<keyword id="KW-0883">Thioether bond</keyword>
<accession>O42713</accession>
<accession>Q12543</accession>
<comment type="function">
    <text evidence="1">Copper-containing oxidase that catalyzes both the o-hydroxylation of monophenols and the subsequent oxidation of the resulting o-diphenols into reactive o-quinones, which evolve spontaneously to produce intermediates, which associate in dark brown pigments. Involved in the initial step of melanin synthesis. Melanins constitute a mechanism of defense and resistance to stress such as UV radiations, free radicals, gamma rays, dehydratation and extreme temperatures, and contribute to the fungal cell-wall resistance against hydrolytic enzymes in avoiding cellular lysis. Fungal pigments are also involved in the formation and stability of spores (By similarity).</text>
</comment>
<comment type="catalytic activity">
    <reaction>
        <text>2 L-dopa + O2 = 2 L-dopaquinone + 2 H2O</text>
        <dbReference type="Rhea" id="RHEA:34287"/>
        <dbReference type="ChEBI" id="CHEBI:15377"/>
        <dbReference type="ChEBI" id="CHEBI:15379"/>
        <dbReference type="ChEBI" id="CHEBI:57504"/>
        <dbReference type="ChEBI" id="CHEBI:57924"/>
        <dbReference type="EC" id="1.14.18.1"/>
    </reaction>
</comment>
<comment type="catalytic activity">
    <reaction>
        <text>L-tyrosine + O2 = L-dopaquinone + H2O</text>
        <dbReference type="Rhea" id="RHEA:18117"/>
        <dbReference type="ChEBI" id="CHEBI:15377"/>
        <dbReference type="ChEBI" id="CHEBI:15379"/>
        <dbReference type="ChEBI" id="CHEBI:57924"/>
        <dbReference type="ChEBI" id="CHEBI:58315"/>
        <dbReference type="EC" id="1.14.18.1"/>
    </reaction>
</comment>
<comment type="cofactor">
    <cofactor evidence="2">
        <name>Cu(2+)</name>
        <dbReference type="ChEBI" id="CHEBI:29036"/>
    </cofactor>
    <text evidence="2">Binds 2 copper ions per subunit.</text>
</comment>
<comment type="subunit">
    <text evidence="1">Heterotetramer.</text>
</comment>
<comment type="developmental stage">
    <text evidence="3">Expressed during the fruiting body stage.</text>
</comment>
<comment type="PTM">
    <text evidence="1">The C-ter is probably cleaved after Gly-378 since the mature active protein is smaller than the protein encoded by the gene.</text>
</comment>
<comment type="similarity">
    <text evidence="4">Belongs to the tyrosinase family.</text>
</comment>
<comment type="sequence caution" evidence="4">
    <conflict type="frameshift">
        <sequence resource="EMBL-CDS" id="CAA61562"/>
    </conflict>
</comment>
<dbReference type="EC" id="1.14.18.1"/>
<dbReference type="EMBL" id="AJ223816">
    <property type="protein sequence ID" value="CAA11562.1"/>
    <property type="molecule type" value="mRNA"/>
</dbReference>
<dbReference type="EMBL" id="X89382">
    <property type="protein sequence ID" value="CAA61562.1"/>
    <property type="status" value="ALT_FRAME"/>
    <property type="molecule type" value="mRNA"/>
</dbReference>
<dbReference type="SMR" id="O42713"/>
<dbReference type="BindingDB" id="O42713"/>
<dbReference type="ChEMBL" id="CHEMBL3318"/>
<dbReference type="DrugCentral" id="O42713"/>
<dbReference type="BRENDA" id="1.14.18.1">
    <property type="organism ID" value="178"/>
</dbReference>
<dbReference type="SABIO-RK" id="O42713"/>
<dbReference type="GO" id="GO:0046872">
    <property type="term" value="F:metal ion binding"/>
    <property type="evidence" value="ECO:0007669"/>
    <property type="project" value="UniProtKB-KW"/>
</dbReference>
<dbReference type="GO" id="GO:0004503">
    <property type="term" value="F:tyrosinase activity"/>
    <property type="evidence" value="ECO:0007669"/>
    <property type="project" value="UniProtKB-EC"/>
</dbReference>
<dbReference type="GO" id="GO:0042438">
    <property type="term" value="P:melanin biosynthetic process"/>
    <property type="evidence" value="ECO:0007669"/>
    <property type="project" value="UniProtKB-KW"/>
</dbReference>
<dbReference type="Gene3D" id="2.60.310.20">
    <property type="match status" value="1"/>
</dbReference>
<dbReference type="Gene3D" id="1.10.1280.10">
    <property type="entry name" value="Di-copper center containing domain from catechol oxidase"/>
    <property type="match status" value="1"/>
</dbReference>
<dbReference type="InterPro" id="IPR008922">
    <property type="entry name" value="Di-copper_centre_dom_sf"/>
</dbReference>
<dbReference type="InterPro" id="IPR016216">
    <property type="entry name" value="Monophenol_mOase_fun"/>
</dbReference>
<dbReference type="InterPro" id="IPR050316">
    <property type="entry name" value="Tyrosinase/Hemocyanin"/>
</dbReference>
<dbReference type="InterPro" id="IPR041640">
    <property type="entry name" value="Tyrosinase_C"/>
</dbReference>
<dbReference type="InterPro" id="IPR002227">
    <property type="entry name" value="Tyrosinase_Cu-bd"/>
</dbReference>
<dbReference type="PANTHER" id="PTHR11474:SF76">
    <property type="entry name" value="SHKT DOMAIN-CONTAINING PROTEIN"/>
    <property type="match status" value="1"/>
</dbReference>
<dbReference type="PANTHER" id="PTHR11474">
    <property type="entry name" value="TYROSINASE FAMILY MEMBER"/>
    <property type="match status" value="1"/>
</dbReference>
<dbReference type="Pfam" id="PF00264">
    <property type="entry name" value="Tyrosinase"/>
    <property type="match status" value="1"/>
</dbReference>
<dbReference type="Pfam" id="PF18132">
    <property type="entry name" value="Tyrosinase_C"/>
    <property type="match status" value="1"/>
</dbReference>
<dbReference type="PIRSF" id="PIRSF000340">
    <property type="entry name" value="MPO_fungal"/>
    <property type="match status" value="1"/>
</dbReference>
<dbReference type="PRINTS" id="PR00092">
    <property type="entry name" value="TYROSINASE"/>
</dbReference>
<dbReference type="SUPFAM" id="SSF48056">
    <property type="entry name" value="Di-copper centre-containing domain"/>
    <property type="match status" value="1"/>
</dbReference>
<dbReference type="PROSITE" id="PS00497">
    <property type="entry name" value="TYROSINASE_1"/>
    <property type="match status" value="1"/>
</dbReference>
<dbReference type="PROSITE" id="PS00498">
    <property type="entry name" value="TYROSINASE_2"/>
    <property type="match status" value="1"/>
</dbReference>
<reference key="1">
    <citation type="journal article" date="2003" name="Appl. Microbiol. Biotechnol.">
        <title>Cloning, expression and characterisation of two tyrosinase cDNAs from Agaricus bisporus.</title>
        <authorList>
            <person name="Wichers H."/>
            <person name="Recourt K."/>
            <person name="Hendriks M."/>
            <person name="Ebbelaar C.E.M."/>
            <person name="Biancone G."/>
            <person name="Hoeberichts F."/>
            <person name="Mooibroek H."/>
            <person name="Soler-Rivas C."/>
        </authorList>
    </citation>
    <scope>NUCLEOTIDE SEQUENCE [MRNA]</scope>
    <source>
        <strain>Horst U1</strain>
    </source>
</reference>
<reference key="2">
    <citation type="submission" date="1995-06" db="EMBL/GenBank/DDBJ databases">
        <title>Characterization of a fruiting body-expressed gene encoding a putative polyphenol oxidase of Agaricus bisporus.</title>
        <authorList>
            <person name="Ebbelar C.E.M."/>
            <person name="Wichers H.J."/>
            <person name="Van Den Bosch T."/>
            <person name="Oyevaar J.I."/>
            <person name="Recourt K."/>
        </authorList>
    </citation>
    <scope>NUCLEOTIDE SEQUENCE [MRNA] OF 122-556</scope>
    <source>
        <strain>Horst U1</strain>
    </source>
</reference>
<reference key="3">
    <citation type="journal article" date="2010" name="Appl. Microbiol. Biotechnol.">
        <title>Expression of phenol oxidase and heat-shock genes during the development of Agaricus bisporus fruiting bodies, healthy and infected by Lecanicillium fungicola.</title>
        <authorList>
            <person name="Largeteau M.L."/>
            <person name="Latapy C."/>
            <person name="Minvielle N."/>
            <person name="Regnault-Roger C."/>
            <person name="Savoie J.M."/>
        </authorList>
    </citation>
    <scope>DEVELOPMENTAL STAGE</scope>
</reference>
<organism>
    <name type="scientific">Agaricus bisporus</name>
    <name type="common">White button mushroom</name>
    <dbReference type="NCBI Taxonomy" id="5341"/>
    <lineage>
        <taxon>Eukaryota</taxon>
        <taxon>Fungi</taxon>
        <taxon>Dikarya</taxon>
        <taxon>Basidiomycota</taxon>
        <taxon>Agaricomycotina</taxon>
        <taxon>Agaricomycetes</taxon>
        <taxon>Agaricomycetidae</taxon>
        <taxon>Agaricales</taxon>
        <taxon>Agaricineae</taxon>
        <taxon>Agaricaceae</taxon>
        <taxon>Agaricus</taxon>
    </lineage>
</organism>
<gene>
    <name type="primary">PPO2</name>
</gene>
<evidence type="ECO:0000250" key="1"/>
<evidence type="ECO:0000250" key="2">
    <source>
        <dbReference type="UniProtKB" id="Q9ZP19"/>
    </source>
</evidence>
<evidence type="ECO:0000269" key="3">
    <source>
    </source>
</evidence>
<evidence type="ECO:0000305" key="4"/>
<name>PPO2_AGABI</name>
<sequence>MSLIATVGPTGGVKNRLNIVDFVKNEKFFTLYVRSLELLQAKEQHDYSSFFQLAGIHGLPFTEWAKERPSMNLYKAGYCTHGQVLFPTWHRTYLSVLEQILQGAAIEVAKKFTSNQTDWVQAAQDLRQPYWDWGFELMPPDEVIKNEEVNITNYDGKKISVKNPILRYHFHPIDPSFKPYGDFATWRTTVRNPDRNRREDIPGLIKKMRLEEGQIREKTYNMLKFNDAWERFSNHGISDDQHANSLESVHDDIHVMVGYGKIEGHMDHPFFAAFDPIFWLHHTNVDRLLSLWKAINPDVWVTSGRNRDGTMGIAPNAQINSETPLEPFYQSGDKVWTSASLADTARLGYSYPDFDKLVGGTKELIRDAIDDLIDERYGSKPSSGARNTAFDLLADFKGITKEHKEDLKMYDWTIHVAFKKFELKESFSLLFYFASDGGDYDQENCFVGSINAFRGTAPETCANCQDNENLIQEGFIHLNHYLARDLESFEPQDVHKFLKEKGLSYKLYSRGDKPLTSLSVKIEGRPLHLPPGEHRPKYDHTQARVVFDDVAVHVIN</sequence>
<protein>
    <recommendedName>
        <fullName>Polyphenol oxidase 2</fullName>
        <shortName>PPO2</shortName>
        <shortName>Phenolase 2</shortName>
        <ecNumber>1.14.18.1</ecNumber>
    </recommendedName>
    <alternativeName>
        <fullName>Cresolase 2</fullName>
    </alternativeName>
    <alternativeName>
        <fullName>Tyrosinase 2</fullName>
    </alternativeName>
</protein>